<name>SYK_PARMW</name>
<gene>
    <name evidence="1" type="primary">lysS</name>
    <name type="ordered locus">SYNW0127</name>
</gene>
<accession>Q7U9X5</accession>
<protein>
    <recommendedName>
        <fullName evidence="1">Lysine--tRNA ligase</fullName>
        <ecNumber evidence="1">6.1.1.6</ecNumber>
    </recommendedName>
    <alternativeName>
        <fullName evidence="1">Lysyl-tRNA synthetase</fullName>
        <shortName evidence="1">LysRS</shortName>
    </alternativeName>
</protein>
<evidence type="ECO:0000255" key="1">
    <source>
        <dbReference type="HAMAP-Rule" id="MF_00252"/>
    </source>
</evidence>
<keyword id="KW-0030">Aminoacyl-tRNA synthetase</keyword>
<keyword id="KW-0067">ATP-binding</keyword>
<keyword id="KW-0963">Cytoplasm</keyword>
<keyword id="KW-0436">Ligase</keyword>
<keyword id="KW-0460">Magnesium</keyword>
<keyword id="KW-0479">Metal-binding</keyword>
<keyword id="KW-0547">Nucleotide-binding</keyword>
<keyword id="KW-0648">Protein biosynthesis</keyword>
<dbReference type="EC" id="6.1.1.6" evidence="1"/>
<dbReference type="EMBL" id="BX569689">
    <property type="protein sequence ID" value="CAE06642.1"/>
    <property type="molecule type" value="Genomic_DNA"/>
</dbReference>
<dbReference type="RefSeq" id="WP_011127005.1">
    <property type="nucleotide sequence ID" value="NC_005070.1"/>
</dbReference>
<dbReference type="SMR" id="Q7U9X5"/>
<dbReference type="STRING" id="84588.SYNW0127"/>
<dbReference type="KEGG" id="syw:SYNW0127"/>
<dbReference type="eggNOG" id="COG1190">
    <property type="taxonomic scope" value="Bacteria"/>
</dbReference>
<dbReference type="HOGENOM" id="CLU_008255_6_0_3"/>
<dbReference type="Proteomes" id="UP000001422">
    <property type="component" value="Chromosome"/>
</dbReference>
<dbReference type="GO" id="GO:0005829">
    <property type="term" value="C:cytosol"/>
    <property type="evidence" value="ECO:0007669"/>
    <property type="project" value="TreeGrafter"/>
</dbReference>
<dbReference type="GO" id="GO:0005524">
    <property type="term" value="F:ATP binding"/>
    <property type="evidence" value="ECO:0007669"/>
    <property type="project" value="UniProtKB-UniRule"/>
</dbReference>
<dbReference type="GO" id="GO:0004824">
    <property type="term" value="F:lysine-tRNA ligase activity"/>
    <property type="evidence" value="ECO:0007669"/>
    <property type="project" value="UniProtKB-UniRule"/>
</dbReference>
<dbReference type="GO" id="GO:0000287">
    <property type="term" value="F:magnesium ion binding"/>
    <property type="evidence" value="ECO:0007669"/>
    <property type="project" value="UniProtKB-UniRule"/>
</dbReference>
<dbReference type="GO" id="GO:0000049">
    <property type="term" value="F:tRNA binding"/>
    <property type="evidence" value="ECO:0007669"/>
    <property type="project" value="TreeGrafter"/>
</dbReference>
<dbReference type="GO" id="GO:0006430">
    <property type="term" value="P:lysyl-tRNA aminoacylation"/>
    <property type="evidence" value="ECO:0007669"/>
    <property type="project" value="UniProtKB-UniRule"/>
</dbReference>
<dbReference type="CDD" id="cd00775">
    <property type="entry name" value="LysRS_core"/>
    <property type="match status" value="1"/>
</dbReference>
<dbReference type="CDD" id="cd04322">
    <property type="entry name" value="LysRS_N"/>
    <property type="match status" value="1"/>
</dbReference>
<dbReference type="FunFam" id="2.40.50.140:FF:000024">
    <property type="entry name" value="Lysine--tRNA ligase"/>
    <property type="match status" value="1"/>
</dbReference>
<dbReference type="Gene3D" id="3.30.930.10">
    <property type="entry name" value="Bira Bifunctional Protein, Domain 2"/>
    <property type="match status" value="1"/>
</dbReference>
<dbReference type="Gene3D" id="2.40.50.140">
    <property type="entry name" value="Nucleic acid-binding proteins"/>
    <property type="match status" value="1"/>
</dbReference>
<dbReference type="HAMAP" id="MF_00252">
    <property type="entry name" value="Lys_tRNA_synth_class2"/>
    <property type="match status" value="1"/>
</dbReference>
<dbReference type="InterPro" id="IPR004364">
    <property type="entry name" value="Aa-tRNA-synt_II"/>
</dbReference>
<dbReference type="InterPro" id="IPR006195">
    <property type="entry name" value="aa-tRNA-synth_II"/>
</dbReference>
<dbReference type="InterPro" id="IPR045864">
    <property type="entry name" value="aa-tRNA-synth_II/BPL/LPL"/>
</dbReference>
<dbReference type="InterPro" id="IPR002313">
    <property type="entry name" value="Lys-tRNA-ligase_II"/>
</dbReference>
<dbReference type="InterPro" id="IPR044136">
    <property type="entry name" value="Lys-tRNA-ligase_II_N"/>
</dbReference>
<dbReference type="InterPro" id="IPR018149">
    <property type="entry name" value="Lys-tRNA-synth_II_C"/>
</dbReference>
<dbReference type="InterPro" id="IPR012340">
    <property type="entry name" value="NA-bd_OB-fold"/>
</dbReference>
<dbReference type="InterPro" id="IPR004365">
    <property type="entry name" value="NA-bd_OB_tRNA"/>
</dbReference>
<dbReference type="NCBIfam" id="TIGR00499">
    <property type="entry name" value="lysS_bact"/>
    <property type="match status" value="1"/>
</dbReference>
<dbReference type="NCBIfam" id="NF001756">
    <property type="entry name" value="PRK00484.1"/>
    <property type="match status" value="1"/>
</dbReference>
<dbReference type="PANTHER" id="PTHR42918:SF15">
    <property type="entry name" value="LYSINE--TRNA LIGASE, CHLOROPLASTIC_MITOCHONDRIAL"/>
    <property type="match status" value="1"/>
</dbReference>
<dbReference type="PANTHER" id="PTHR42918">
    <property type="entry name" value="LYSYL-TRNA SYNTHETASE"/>
    <property type="match status" value="1"/>
</dbReference>
<dbReference type="Pfam" id="PF00152">
    <property type="entry name" value="tRNA-synt_2"/>
    <property type="match status" value="1"/>
</dbReference>
<dbReference type="Pfam" id="PF01336">
    <property type="entry name" value="tRNA_anti-codon"/>
    <property type="match status" value="1"/>
</dbReference>
<dbReference type="PRINTS" id="PR00982">
    <property type="entry name" value="TRNASYNTHLYS"/>
</dbReference>
<dbReference type="SUPFAM" id="SSF55681">
    <property type="entry name" value="Class II aaRS and biotin synthetases"/>
    <property type="match status" value="1"/>
</dbReference>
<dbReference type="SUPFAM" id="SSF50249">
    <property type="entry name" value="Nucleic acid-binding proteins"/>
    <property type="match status" value="1"/>
</dbReference>
<dbReference type="PROSITE" id="PS50862">
    <property type="entry name" value="AA_TRNA_LIGASE_II"/>
    <property type="match status" value="1"/>
</dbReference>
<comment type="catalytic activity">
    <reaction evidence="1">
        <text>tRNA(Lys) + L-lysine + ATP = L-lysyl-tRNA(Lys) + AMP + diphosphate</text>
        <dbReference type="Rhea" id="RHEA:20792"/>
        <dbReference type="Rhea" id="RHEA-COMP:9696"/>
        <dbReference type="Rhea" id="RHEA-COMP:9697"/>
        <dbReference type="ChEBI" id="CHEBI:30616"/>
        <dbReference type="ChEBI" id="CHEBI:32551"/>
        <dbReference type="ChEBI" id="CHEBI:33019"/>
        <dbReference type="ChEBI" id="CHEBI:78442"/>
        <dbReference type="ChEBI" id="CHEBI:78529"/>
        <dbReference type="ChEBI" id="CHEBI:456215"/>
        <dbReference type="EC" id="6.1.1.6"/>
    </reaction>
</comment>
<comment type="cofactor">
    <cofactor evidence="1">
        <name>Mg(2+)</name>
        <dbReference type="ChEBI" id="CHEBI:18420"/>
    </cofactor>
    <text evidence="1">Binds 3 Mg(2+) ions per subunit.</text>
</comment>
<comment type="subunit">
    <text evidence="1">Homodimer.</text>
</comment>
<comment type="subcellular location">
    <subcellularLocation>
        <location evidence="1">Cytoplasm</location>
    </subcellularLocation>
</comment>
<comment type="similarity">
    <text evidence="1">Belongs to the class-II aminoacyl-tRNA synthetase family.</text>
</comment>
<reference key="1">
    <citation type="journal article" date="2003" name="Nature">
        <title>The genome of a motile marine Synechococcus.</title>
        <authorList>
            <person name="Palenik B."/>
            <person name="Brahamsha B."/>
            <person name="Larimer F.W."/>
            <person name="Land M.L."/>
            <person name="Hauser L."/>
            <person name="Chain P."/>
            <person name="Lamerdin J.E."/>
            <person name="Regala W."/>
            <person name="Allen E.E."/>
            <person name="McCarren J."/>
            <person name="Paulsen I.T."/>
            <person name="Dufresne A."/>
            <person name="Partensky F."/>
            <person name="Webb E.A."/>
            <person name="Waterbury J."/>
        </authorList>
    </citation>
    <scope>NUCLEOTIDE SEQUENCE [LARGE SCALE GENOMIC DNA]</scope>
    <source>
        <strain>WH8102</strain>
    </source>
</reference>
<organism>
    <name type="scientific">Parasynechococcus marenigrum (strain WH8102)</name>
    <dbReference type="NCBI Taxonomy" id="84588"/>
    <lineage>
        <taxon>Bacteria</taxon>
        <taxon>Bacillati</taxon>
        <taxon>Cyanobacteriota</taxon>
        <taxon>Cyanophyceae</taxon>
        <taxon>Synechococcales</taxon>
        <taxon>Prochlorococcaceae</taxon>
        <taxon>Parasynechococcus</taxon>
        <taxon>Parasynechococcus marenigrum</taxon>
    </lineage>
</organism>
<sequence length="502" mass="56148">MSELRDTRLEKCQALSDLGQGPYALNFEPTHRMAALHEAHADLPNGEEREVTVSVAGRVMTRRVMGKLAFFTLADETGTIQLFLEKAGLEAQQEGWFKQITGLVDGGDWLGVSGTLRRTDRGELSVKVSDWRMLTKALQPLPDKWHGLADVEKRYRQRYLDLIVSPDSRETFRRRARLVSGIRRWLDQRDFLEIETPVLQSEPGGADARPFETHHNALDLPLTLRIATELHLKRLVVGGFERVYELGRIFRNEGVSTRHNPEFTSVEIYQAYSDYIGMMELTEQMVSAVCQEVCGSCQITYQDTEIDLSPPWRRATMHELVEEATGLDFNSFSSREAAAVAMTGKGLHAPELADSVGRLLNEAFEQAVETTLIQPTFVTDYPVEISPLARPHRSKPGLVERFELFIVGREHANAFSELTDPVDQRQRLEAQQARKAAGDLEAQGLDEDFVTALEVGMPPTGGLGIGIDRLVMLLTDSPSIRDVIAFPLLRPEPRAADAPAMG</sequence>
<feature type="chain" id="PRO_0000152694" description="Lysine--tRNA ligase">
    <location>
        <begin position="1"/>
        <end position="502"/>
    </location>
</feature>
<feature type="binding site" evidence="1">
    <location>
        <position position="403"/>
    </location>
    <ligand>
        <name>Mg(2+)</name>
        <dbReference type="ChEBI" id="CHEBI:18420"/>
        <label>1</label>
    </ligand>
</feature>
<feature type="binding site" evidence="1">
    <location>
        <position position="410"/>
    </location>
    <ligand>
        <name>Mg(2+)</name>
        <dbReference type="ChEBI" id="CHEBI:18420"/>
        <label>1</label>
    </ligand>
</feature>
<feature type="binding site" evidence="1">
    <location>
        <position position="410"/>
    </location>
    <ligand>
        <name>Mg(2+)</name>
        <dbReference type="ChEBI" id="CHEBI:18420"/>
        <label>2</label>
    </ligand>
</feature>
<proteinExistence type="inferred from homology"/>